<evidence type="ECO:0000250" key="1">
    <source>
        <dbReference type="UniProtKB" id="P51869"/>
    </source>
</evidence>
<evidence type="ECO:0000250" key="2">
    <source>
        <dbReference type="UniProtKB" id="Q6ZWL3"/>
    </source>
</evidence>
<evidence type="ECO:0000255" key="3"/>
<evidence type="ECO:0000305" key="4"/>
<comment type="function">
    <text evidence="2">A cytochrome P450 monooxygenase involved in fatty acid metabolism in the eye. Catalyzes the omega-hydroxylation of polyunsaturated fatty acids (PUFAs) docosahexaenoate (DHA) and its precursor eicosapentaenoate (EPA), and may contribute to the homeostasis of these retinal PUFAs. Omega hydroxylates saturated fatty acids such as laurate, myristate and palmitate, the catalytic efficiency decreasing in the following order: myristate &gt; laurate &gt; palmitate (C14&gt;C12&gt;C16). Mechanistically, uses molecular oxygen inserting one oxygen atom into a substrate, and reducing the second into a water molecule, with two electrons provided by NADPH via cytochrome P450 reductase (CPR; NADPH-ferrihemoprotein reductase).</text>
</comment>
<comment type="catalytic activity">
    <reaction evidence="2">
        <text>dodecanoate + reduced [NADPH--hemoprotein reductase] + O2 = 12-hydroxydodecanoate + oxidized [NADPH--hemoprotein reductase] + H2O + H(+)</text>
        <dbReference type="Rhea" id="RHEA:38947"/>
        <dbReference type="Rhea" id="RHEA-COMP:11964"/>
        <dbReference type="Rhea" id="RHEA-COMP:11965"/>
        <dbReference type="ChEBI" id="CHEBI:15377"/>
        <dbReference type="ChEBI" id="CHEBI:15378"/>
        <dbReference type="ChEBI" id="CHEBI:15379"/>
        <dbReference type="ChEBI" id="CHEBI:18262"/>
        <dbReference type="ChEBI" id="CHEBI:36204"/>
        <dbReference type="ChEBI" id="CHEBI:57618"/>
        <dbReference type="ChEBI" id="CHEBI:58210"/>
    </reaction>
    <physiologicalReaction direction="left-to-right" evidence="2">
        <dbReference type="Rhea" id="RHEA:38948"/>
    </physiologicalReaction>
</comment>
<comment type="catalytic activity">
    <reaction evidence="2">
        <text>tetradecanoate + reduced [NADPH--hemoprotein reductase] + O2 = 14-hydroxytetradecanoate + oxidized [NADPH--hemoprotein reductase] + H2O + H(+)</text>
        <dbReference type="Rhea" id="RHEA:40203"/>
        <dbReference type="Rhea" id="RHEA-COMP:11964"/>
        <dbReference type="Rhea" id="RHEA-COMP:11965"/>
        <dbReference type="ChEBI" id="CHEBI:15377"/>
        <dbReference type="ChEBI" id="CHEBI:15378"/>
        <dbReference type="ChEBI" id="CHEBI:15379"/>
        <dbReference type="ChEBI" id="CHEBI:30807"/>
        <dbReference type="ChEBI" id="CHEBI:57618"/>
        <dbReference type="ChEBI" id="CHEBI:58210"/>
        <dbReference type="ChEBI" id="CHEBI:77033"/>
    </reaction>
    <physiologicalReaction direction="left-to-right" evidence="2">
        <dbReference type="Rhea" id="RHEA:40204"/>
    </physiologicalReaction>
</comment>
<comment type="catalytic activity">
    <reaction evidence="2">
        <text>hexadecanoate + reduced [NADPH--hemoprotein reductase] + O2 = 16-hydroxyhexadecanoate + oxidized [NADPH--hemoprotein reductase] + H2O + H(+)</text>
        <dbReference type="Rhea" id="RHEA:40199"/>
        <dbReference type="Rhea" id="RHEA-COMP:11964"/>
        <dbReference type="Rhea" id="RHEA-COMP:11965"/>
        <dbReference type="ChEBI" id="CHEBI:7896"/>
        <dbReference type="ChEBI" id="CHEBI:15377"/>
        <dbReference type="ChEBI" id="CHEBI:15378"/>
        <dbReference type="ChEBI" id="CHEBI:15379"/>
        <dbReference type="ChEBI" id="CHEBI:55329"/>
        <dbReference type="ChEBI" id="CHEBI:57618"/>
        <dbReference type="ChEBI" id="CHEBI:58210"/>
        <dbReference type="EC" id="1.14.14.80"/>
    </reaction>
    <physiologicalReaction direction="left-to-right" evidence="2">
        <dbReference type="Rhea" id="RHEA:40200"/>
    </physiologicalReaction>
</comment>
<comment type="catalytic activity">
    <reaction evidence="2">
        <text>(5Z,8Z,11Z,14Z,17Z)-eicosapentaenoate + reduced [NADPH--hemoprotein reductase] + O2 = 20-hydroxy-(5Z,8Z,11Z,14Z,17Z)-eicosapentaenoate + oxidized [NADPH--hemoprotein reductase] + H2O + H(+)</text>
        <dbReference type="Rhea" id="RHEA:39791"/>
        <dbReference type="Rhea" id="RHEA-COMP:11964"/>
        <dbReference type="Rhea" id="RHEA-COMP:11965"/>
        <dbReference type="ChEBI" id="CHEBI:15377"/>
        <dbReference type="ChEBI" id="CHEBI:15378"/>
        <dbReference type="ChEBI" id="CHEBI:15379"/>
        <dbReference type="ChEBI" id="CHEBI:57618"/>
        <dbReference type="ChEBI" id="CHEBI:58210"/>
        <dbReference type="ChEBI" id="CHEBI:58562"/>
        <dbReference type="ChEBI" id="CHEBI:76639"/>
    </reaction>
    <physiologicalReaction direction="left-to-right" evidence="2">
        <dbReference type="Rhea" id="RHEA:39792"/>
    </physiologicalReaction>
</comment>
<comment type="catalytic activity">
    <reaction evidence="2">
        <text>(4Z,7Z,10Z,13Z,16Z,19Z)-docosahexaenoate + reduced [NADPH--hemoprotein reductase] + O2 = 22-hydroxy-(4Z,7Z,10Z,13Z,16Z,19Z)-docosahexaenoate + oxidized [NADPH--hemoprotein reductase] + H2O + H(+)</text>
        <dbReference type="Rhea" id="RHEA:40155"/>
        <dbReference type="Rhea" id="RHEA-COMP:11964"/>
        <dbReference type="Rhea" id="RHEA-COMP:11965"/>
        <dbReference type="ChEBI" id="CHEBI:15377"/>
        <dbReference type="ChEBI" id="CHEBI:15378"/>
        <dbReference type="ChEBI" id="CHEBI:15379"/>
        <dbReference type="ChEBI" id="CHEBI:57618"/>
        <dbReference type="ChEBI" id="CHEBI:58210"/>
        <dbReference type="ChEBI" id="CHEBI:77015"/>
        <dbReference type="ChEBI" id="CHEBI:77016"/>
        <dbReference type="EC" id="1.14.14.79"/>
    </reaction>
    <physiologicalReaction direction="left-to-right" evidence="2">
        <dbReference type="Rhea" id="RHEA:40156"/>
    </physiologicalReaction>
</comment>
<comment type="cofactor">
    <cofactor evidence="1">
        <name>heme</name>
        <dbReference type="ChEBI" id="CHEBI:30413"/>
    </cofactor>
</comment>
<comment type="activity regulation">
    <text evidence="2">Inhibited by N-hydroxy-N'-(4-n-butyl-2-methylphenyl formamidine)(HET0016) with an IC(50) of 38 nM.</text>
</comment>
<comment type="pathway">
    <text evidence="2">Lipid metabolism; fatty acid metabolism.</text>
</comment>
<comment type="subcellular location">
    <subcellularLocation>
        <location evidence="2">Endoplasmic reticulum membrane</location>
        <topology evidence="4">Single-pass membrane protein</topology>
    </subcellularLocation>
</comment>
<comment type="similarity">
    <text evidence="4">Belongs to the cytochrome P450 family.</text>
</comment>
<feature type="chain" id="PRO_0000051860" description="Cytochrome P450 4V2">
    <location>
        <begin position="1"/>
        <end position="525"/>
    </location>
</feature>
<feature type="transmembrane region" description="Helical" evidence="3">
    <location>
        <begin position="13"/>
        <end position="33"/>
    </location>
</feature>
<feature type="binding site" description="covalent" evidence="1">
    <location>
        <position position="329"/>
    </location>
    <ligand>
        <name>heme</name>
        <dbReference type="ChEBI" id="CHEBI:30413"/>
    </ligand>
</feature>
<feature type="binding site" description="axial binding residue" evidence="1">
    <location>
        <position position="467"/>
    </location>
    <ligand>
        <name>heme</name>
        <dbReference type="ChEBI" id="CHEBI:30413"/>
    </ligand>
    <ligandPart>
        <name>Fe</name>
        <dbReference type="ChEBI" id="CHEBI:18248"/>
    </ligandPart>
</feature>
<proteinExistence type="evidence at transcript level"/>
<accession>Q5RCN6</accession>
<reference key="1">
    <citation type="submission" date="2004-11" db="EMBL/GenBank/DDBJ databases">
        <authorList>
            <consortium name="The German cDNA consortium"/>
        </authorList>
    </citation>
    <scope>NUCLEOTIDE SEQUENCE [LARGE SCALE MRNA]</scope>
    <source>
        <tissue>Kidney</tissue>
    </source>
</reference>
<dbReference type="EC" id="1.14.14.79" evidence="2"/>
<dbReference type="EC" id="1.14.14.80" evidence="2"/>
<dbReference type="EMBL" id="CR858234">
    <property type="protein sequence ID" value="CAH90471.1"/>
    <property type="molecule type" value="mRNA"/>
</dbReference>
<dbReference type="RefSeq" id="NP_001125245.1">
    <property type="nucleotide sequence ID" value="NM_001131773.1"/>
</dbReference>
<dbReference type="SMR" id="Q5RCN6"/>
<dbReference type="FunCoup" id="Q5RCN6">
    <property type="interactions" value="420"/>
</dbReference>
<dbReference type="STRING" id="9601.ENSPPYP00000017045"/>
<dbReference type="GeneID" id="100172140"/>
<dbReference type="KEGG" id="pon:100172140"/>
<dbReference type="CTD" id="285440"/>
<dbReference type="eggNOG" id="KOG0157">
    <property type="taxonomic scope" value="Eukaryota"/>
</dbReference>
<dbReference type="eggNOG" id="KOG3627">
    <property type="taxonomic scope" value="Eukaryota"/>
</dbReference>
<dbReference type="InParanoid" id="Q5RCN6"/>
<dbReference type="OrthoDB" id="1470350at2759"/>
<dbReference type="UniPathway" id="UPA00199"/>
<dbReference type="Proteomes" id="UP000001595">
    <property type="component" value="Unplaced"/>
</dbReference>
<dbReference type="GO" id="GO:0005789">
    <property type="term" value="C:endoplasmic reticulum membrane"/>
    <property type="evidence" value="ECO:0000250"/>
    <property type="project" value="UniProtKB"/>
</dbReference>
<dbReference type="GO" id="GO:0020037">
    <property type="term" value="F:heme binding"/>
    <property type="evidence" value="ECO:0007669"/>
    <property type="project" value="InterPro"/>
</dbReference>
<dbReference type="GO" id="GO:0005506">
    <property type="term" value="F:iron ion binding"/>
    <property type="evidence" value="ECO:0007669"/>
    <property type="project" value="InterPro"/>
</dbReference>
<dbReference type="GO" id="GO:0102033">
    <property type="term" value="F:long-chain fatty acid omega-hydroxylase activity"/>
    <property type="evidence" value="ECO:0007669"/>
    <property type="project" value="UniProtKB-EC"/>
</dbReference>
<dbReference type="GO" id="GO:0010430">
    <property type="term" value="P:fatty acid omega-oxidation"/>
    <property type="evidence" value="ECO:0000250"/>
    <property type="project" value="UniProtKB"/>
</dbReference>
<dbReference type="CDD" id="cd20680">
    <property type="entry name" value="CYP4V"/>
    <property type="match status" value="1"/>
</dbReference>
<dbReference type="FunFam" id="1.10.630.10:FF:000035">
    <property type="entry name" value="CYtochrome P450 family"/>
    <property type="match status" value="1"/>
</dbReference>
<dbReference type="Gene3D" id="1.10.630.10">
    <property type="entry name" value="Cytochrome P450"/>
    <property type="match status" value="1"/>
</dbReference>
<dbReference type="InterPro" id="IPR001128">
    <property type="entry name" value="Cyt_P450"/>
</dbReference>
<dbReference type="InterPro" id="IPR017972">
    <property type="entry name" value="Cyt_P450_CS"/>
</dbReference>
<dbReference type="InterPro" id="IPR002401">
    <property type="entry name" value="Cyt_P450_E_grp-I"/>
</dbReference>
<dbReference type="InterPro" id="IPR036396">
    <property type="entry name" value="Cyt_P450_sf"/>
</dbReference>
<dbReference type="InterPro" id="IPR050196">
    <property type="entry name" value="Cytochrome_P450_Monoox"/>
</dbReference>
<dbReference type="PANTHER" id="PTHR24291:SF193">
    <property type="entry name" value="CYTOCHROME P450 4V2"/>
    <property type="match status" value="1"/>
</dbReference>
<dbReference type="PANTHER" id="PTHR24291">
    <property type="entry name" value="CYTOCHROME P450 FAMILY 4"/>
    <property type="match status" value="1"/>
</dbReference>
<dbReference type="Pfam" id="PF00067">
    <property type="entry name" value="p450"/>
    <property type="match status" value="1"/>
</dbReference>
<dbReference type="PRINTS" id="PR00463">
    <property type="entry name" value="EP450I"/>
</dbReference>
<dbReference type="PRINTS" id="PR00385">
    <property type="entry name" value="P450"/>
</dbReference>
<dbReference type="SUPFAM" id="SSF48264">
    <property type="entry name" value="Cytochrome P450"/>
    <property type="match status" value="1"/>
</dbReference>
<dbReference type="PROSITE" id="PS00086">
    <property type="entry name" value="CYTOCHROME_P450"/>
    <property type="match status" value="1"/>
</dbReference>
<name>CP4V2_PONAB</name>
<organism>
    <name type="scientific">Pongo abelii</name>
    <name type="common">Sumatran orangutan</name>
    <name type="synonym">Pongo pygmaeus abelii</name>
    <dbReference type="NCBI Taxonomy" id="9601"/>
    <lineage>
        <taxon>Eukaryota</taxon>
        <taxon>Metazoa</taxon>
        <taxon>Chordata</taxon>
        <taxon>Craniata</taxon>
        <taxon>Vertebrata</taxon>
        <taxon>Euteleostomi</taxon>
        <taxon>Mammalia</taxon>
        <taxon>Eutheria</taxon>
        <taxon>Euarchontoglires</taxon>
        <taxon>Primates</taxon>
        <taxon>Haplorrhini</taxon>
        <taxon>Catarrhini</taxon>
        <taxon>Hominidae</taxon>
        <taxon>Pongo</taxon>
    </lineage>
</organism>
<keyword id="KW-0256">Endoplasmic reticulum</keyword>
<keyword id="KW-0349">Heme</keyword>
<keyword id="KW-0408">Iron</keyword>
<keyword id="KW-0443">Lipid metabolism</keyword>
<keyword id="KW-0472">Membrane</keyword>
<keyword id="KW-0479">Metal-binding</keyword>
<keyword id="KW-0503">Monooxygenase</keyword>
<keyword id="KW-0521">NADP</keyword>
<keyword id="KW-0560">Oxidoreductase</keyword>
<keyword id="KW-1185">Reference proteome</keyword>
<keyword id="KW-0812">Transmembrane</keyword>
<keyword id="KW-1133">Transmembrane helix</keyword>
<gene>
    <name type="primary">CYP4V2</name>
</gene>
<sequence length="525" mass="60695">MAGLWLGLVWQKLLLWGAASAVSLAGASLVLSLLQRVASYARKWQQMRPIPTVARAYPLVGHALLMKRDGREFFQQIIEYTEEYRHMPLLKLWVGPVPMVALYNAENVEVILTSSRQIDKSSMYKFLEPWLGLGLLTSTGNKWRSRRKMLTPTFHFTILEDFLDIMNEQANILVKKLEKHVNQEAFNCFFYITLCALDIICETAMGKNIGAQSNDDSEYVRAVYRMSQMIFQRIKMPWLWLDLWYLMFKEGWEHEKGLKILHTFTNNVIAERANEMNADEDCRGVGRGSAPSKNKRRAFLDLLLSVTDDEGNRLSHEDIREEVDTFMFEGHDTTAAAINWSLYLLGCNPEVQQKVDHELDDVFGKSDRPATVEDLKKLRYLECVIKETLRLFPSVPLFARSVSEDCEVAGYRVLKGTEAVIIPYALHRDPRYFPNPEEFQPERFFPENAQGRHPYAYVPFSAGPRNCIGQKFAVMEEKTILSCILRHFWIESNQKREELGLEGQLILRPSNGIWIKLKRRDADEP</sequence>
<protein>
    <recommendedName>
        <fullName>Cytochrome P450 4V2</fullName>
    </recommendedName>
    <alternativeName>
        <fullName evidence="2">Docosahexaenoic acid omega-hydroxylase CYP4V2</fullName>
        <ecNumber evidence="2">1.14.14.79</ecNumber>
    </alternativeName>
    <alternativeName>
        <fullName evidence="2">Long-chain fatty acid omega-monooxygenase</fullName>
        <ecNumber evidence="2">1.14.14.80</ecNumber>
    </alternativeName>
</protein>